<organism>
    <name type="scientific">Chlorobaculum parvum (strain DSM 263 / NCIMB 8327)</name>
    <name type="common">Chlorobium vibrioforme subsp. thiosulfatophilum</name>
    <dbReference type="NCBI Taxonomy" id="517417"/>
    <lineage>
        <taxon>Bacteria</taxon>
        <taxon>Pseudomonadati</taxon>
        <taxon>Chlorobiota</taxon>
        <taxon>Chlorobiia</taxon>
        <taxon>Chlorobiales</taxon>
        <taxon>Chlorobiaceae</taxon>
        <taxon>Chlorobaculum</taxon>
    </lineage>
</organism>
<keyword id="KW-0028">Amino-acid biosynthesis</keyword>
<keyword id="KW-0963">Cytoplasm</keyword>
<keyword id="KW-0220">Diaminopimelate biosynthesis</keyword>
<keyword id="KW-0456">Lyase</keyword>
<keyword id="KW-0457">Lysine biosynthesis</keyword>
<keyword id="KW-0704">Schiff base</keyword>
<comment type="function">
    <text evidence="1">Catalyzes the condensation of (S)-aspartate-beta-semialdehyde [(S)-ASA] and pyruvate to 4-hydroxy-tetrahydrodipicolinate (HTPA).</text>
</comment>
<comment type="catalytic activity">
    <reaction evidence="1">
        <text>L-aspartate 4-semialdehyde + pyruvate = (2S,4S)-4-hydroxy-2,3,4,5-tetrahydrodipicolinate + H2O + H(+)</text>
        <dbReference type="Rhea" id="RHEA:34171"/>
        <dbReference type="ChEBI" id="CHEBI:15361"/>
        <dbReference type="ChEBI" id="CHEBI:15377"/>
        <dbReference type="ChEBI" id="CHEBI:15378"/>
        <dbReference type="ChEBI" id="CHEBI:67139"/>
        <dbReference type="ChEBI" id="CHEBI:537519"/>
        <dbReference type="EC" id="4.3.3.7"/>
    </reaction>
</comment>
<comment type="pathway">
    <text evidence="1">Amino-acid biosynthesis; L-lysine biosynthesis via DAP pathway; (S)-tetrahydrodipicolinate from L-aspartate: step 3/4.</text>
</comment>
<comment type="subunit">
    <text evidence="1">Homotetramer; dimer of dimers.</text>
</comment>
<comment type="subcellular location">
    <subcellularLocation>
        <location evidence="1">Cytoplasm</location>
    </subcellularLocation>
</comment>
<comment type="similarity">
    <text evidence="1">Belongs to the DapA family.</text>
</comment>
<comment type="caution">
    <text evidence="2">Was originally thought to be a dihydrodipicolinate synthase (DHDPS), catalyzing the condensation of (S)-aspartate-beta-semialdehyde [(S)-ASA] and pyruvate to dihydrodipicolinate (DHDP). However, it was shown in E.coli that the product of the enzymatic reaction is not dihydrodipicolinate but in fact (4S)-4-hydroxy-2,3,4,5-tetrahydro-(2S)-dipicolinic acid (HTPA), and that the consecutive dehydration reaction leading to DHDP is not spontaneous but catalyzed by DapB.</text>
</comment>
<dbReference type="EC" id="4.3.3.7" evidence="1"/>
<dbReference type="EMBL" id="CP001099">
    <property type="protein sequence ID" value="ACF10986.1"/>
    <property type="molecule type" value="Genomic_DNA"/>
</dbReference>
<dbReference type="RefSeq" id="WP_012501819.1">
    <property type="nucleotide sequence ID" value="NC_011027.1"/>
</dbReference>
<dbReference type="SMR" id="B3QM33"/>
<dbReference type="STRING" id="517417.Cpar_0564"/>
<dbReference type="KEGG" id="cpc:Cpar_0564"/>
<dbReference type="eggNOG" id="COG0329">
    <property type="taxonomic scope" value="Bacteria"/>
</dbReference>
<dbReference type="HOGENOM" id="CLU_049343_7_0_10"/>
<dbReference type="OrthoDB" id="9782828at2"/>
<dbReference type="UniPathway" id="UPA00034">
    <property type="reaction ID" value="UER00017"/>
</dbReference>
<dbReference type="Proteomes" id="UP000008811">
    <property type="component" value="Chromosome"/>
</dbReference>
<dbReference type="GO" id="GO:0005829">
    <property type="term" value="C:cytosol"/>
    <property type="evidence" value="ECO:0007669"/>
    <property type="project" value="TreeGrafter"/>
</dbReference>
<dbReference type="GO" id="GO:0008840">
    <property type="term" value="F:4-hydroxy-tetrahydrodipicolinate synthase activity"/>
    <property type="evidence" value="ECO:0007669"/>
    <property type="project" value="UniProtKB-UniRule"/>
</dbReference>
<dbReference type="GO" id="GO:0019877">
    <property type="term" value="P:diaminopimelate biosynthetic process"/>
    <property type="evidence" value="ECO:0007669"/>
    <property type="project" value="UniProtKB-UniRule"/>
</dbReference>
<dbReference type="GO" id="GO:0009089">
    <property type="term" value="P:lysine biosynthetic process via diaminopimelate"/>
    <property type="evidence" value="ECO:0007669"/>
    <property type="project" value="UniProtKB-UniRule"/>
</dbReference>
<dbReference type="CDD" id="cd00950">
    <property type="entry name" value="DHDPS"/>
    <property type="match status" value="1"/>
</dbReference>
<dbReference type="Gene3D" id="3.20.20.70">
    <property type="entry name" value="Aldolase class I"/>
    <property type="match status" value="1"/>
</dbReference>
<dbReference type="HAMAP" id="MF_00418">
    <property type="entry name" value="DapA"/>
    <property type="match status" value="1"/>
</dbReference>
<dbReference type="InterPro" id="IPR013785">
    <property type="entry name" value="Aldolase_TIM"/>
</dbReference>
<dbReference type="InterPro" id="IPR005263">
    <property type="entry name" value="DapA"/>
</dbReference>
<dbReference type="InterPro" id="IPR002220">
    <property type="entry name" value="DapA-like"/>
</dbReference>
<dbReference type="InterPro" id="IPR020625">
    <property type="entry name" value="Schiff_base-form_aldolases_AS"/>
</dbReference>
<dbReference type="NCBIfam" id="TIGR00674">
    <property type="entry name" value="dapA"/>
    <property type="match status" value="1"/>
</dbReference>
<dbReference type="PANTHER" id="PTHR12128:SF66">
    <property type="entry name" value="4-HYDROXY-2-OXOGLUTARATE ALDOLASE, MITOCHONDRIAL"/>
    <property type="match status" value="1"/>
</dbReference>
<dbReference type="PANTHER" id="PTHR12128">
    <property type="entry name" value="DIHYDRODIPICOLINATE SYNTHASE"/>
    <property type="match status" value="1"/>
</dbReference>
<dbReference type="Pfam" id="PF00701">
    <property type="entry name" value="DHDPS"/>
    <property type="match status" value="1"/>
</dbReference>
<dbReference type="PIRSF" id="PIRSF001365">
    <property type="entry name" value="DHDPS"/>
    <property type="match status" value="1"/>
</dbReference>
<dbReference type="PRINTS" id="PR00146">
    <property type="entry name" value="DHPICSNTHASE"/>
</dbReference>
<dbReference type="SMART" id="SM01130">
    <property type="entry name" value="DHDPS"/>
    <property type="match status" value="1"/>
</dbReference>
<dbReference type="SUPFAM" id="SSF51569">
    <property type="entry name" value="Aldolase"/>
    <property type="match status" value="1"/>
</dbReference>
<dbReference type="PROSITE" id="PS00666">
    <property type="entry name" value="DHDPS_2"/>
    <property type="match status" value="1"/>
</dbReference>
<proteinExistence type="inferred from homology"/>
<gene>
    <name evidence="1" type="primary">dapA</name>
    <name type="ordered locus">Cpar_0564</name>
</gene>
<accession>B3QM33</accession>
<evidence type="ECO:0000255" key="1">
    <source>
        <dbReference type="HAMAP-Rule" id="MF_00418"/>
    </source>
</evidence>
<evidence type="ECO:0000305" key="2"/>
<reference key="1">
    <citation type="submission" date="2008-06" db="EMBL/GenBank/DDBJ databases">
        <title>Complete sequence of Chlorobaculum parvum NCIB 8327.</title>
        <authorList>
            <consortium name="US DOE Joint Genome Institute"/>
            <person name="Lucas S."/>
            <person name="Copeland A."/>
            <person name="Lapidus A."/>
            <person name="Glavina del Rio T."/>
            <person name="Dalin E."/>
            <person name="Tice H."/>
            <person name="Bruce D."/>
            <person name="Goodwin L."/>
            <person name="Pitluck S."/>
            <person name="Schmutz J."/>
            <person name="Larimer F."/>
            <person name="Land M."/>
            <person name="Hauser L."/>
            <person name="Kyrpides N."/>
            <person name="Mikhailova N."/>
            <person name="Zhao F."/>
            <person name="Li T."/>
            <person name="Liu Z."/>
            <person name="Overmann J."/>
            <person name="Bryant D.A."/>
            <person name="Richardson P."/>
        </authorList>
    </citation>
    <scope>NUCLEOTIDE SEQUENCE [LARGE SCALE GENOMIC DNA]</scope>
    <source>
        <strain>DSM 263 / NCIMB 8327</strain>
    </source>
</reference>
<feature type="chain" id="PRO_1000124022" description="4-hydroxy-tetrahydrodipicolinate synthase">
    <location>
        <begin position="1"/>
        <end position="296"/>
    </location>
</feature>
<feature type="active site" description="Proton donor/acceptor" evidence="1">
    <location>
        <position position="137"/>
    </location>
</feature>
<feature type="active site" description="Schiff-base intermediate with substrate" evidence="1">
    <location>
        <position position="166"/>
    </location>
</feature>
<feature type="binding site" evidence="1">
    <location>
        <position position="49"/>
    </location>
    <ligand>
        <name>pyruvate</name>
        <dbReference type="ChEBI" id="CHEBI:15361"/>
    </ligand>
</feature>
<feature type="binding site" evidence="1">
    <location>
        <position position="208"/>
    </location>
    <ligand>
        <name>pyruvate</name>
        <dbReference type="ChEBI" id="CHEBI:15361"/>
    </ligand>
</feature>
<feature type="site" description="Part of a proton relay during catalysis" evidence="1">
    <location>
        <position position="48"/>
    </location>
</feature>
<feature type="site" description="Part of a proton relay during catalysis" evidence="1">
    <location>
        <position position="111"/>
    </location>
</feature>
<name>DAPA_CHLP8</name>
<protein>
    <recommendedName>
        <fullName evidence="1">4-hydroxy-tetrahydrodipicolinate synthase</fullName>
        <shortName evidence="1">HTPA synthase</shortName>
        <ecNumber evidence="1">4.3.3.7</ecNumber>
    </recommendedName>
</protein>
<sequence>MSNRLISGSTVALVTPFKEDGSVDYEALRRLVRFHREAGTDIILPCGTTGESPTLTNEEEAEIIRTVRDEAGDSMMVAAGAGTNDTRHAVELSRNAEKAGAQAILSVAPYYNKPSQEGYYQHFRHVAESVSVPIIIYNVPGRTASNVSAETILRLAHDFDNVLAVKEASANFEQIMTLIDERPERFSVMTGEDGLMLPFMALGGDGVISVAANQVPKVVKGLIDAMKAGNLEEARAINRKYRKLFRLNFIDSNPVPVKYALSLMGMVEEAYRLPLVPMSDADKATMKAELEQLGLI</sequence>